<proteinExistence type="inferred from homology"/>
<protein>
    <recommendedName>
        <fullName>Protein PXR1</fullName>
    </recommendedName>
    <alternativeName>
        <fullName>PinX1-related protein 1</fullName>
    </alternativeName>
</protein>
<evidence type="ECO:0000250" key="1"/>
<evidence type="ECO:0000255" key="2">
    <source>
        <dbReference type="PROSITE-ProRule" id="PRU00092"/>
    </source>
</evidence>
<evidence type="ECO:0000256" key="3">
    <source>
        <dbReference type="SAM" id="MobiDB-lite"/>
    </source>
</evidence>
<evidence type="ECO:0000305" key="4"/>
<organism>
    <name type="scientific">Kluyveromyces lactis (strain ATCC 8585 / CBS 2359 / DSM 70799 / NBRC 1267 / NRRL Y-1140 / WM37)</name>
    <name type="common">Yeast</name>
    <name type="synonym">Candida sphaerica</name>
    <dbReference type="NCBI Taxonomy" id="284590"/>
    <lineage>
        <taxon>Eukaryota</taxon>
        <taxon>Fungi</taxon>
        <taxon>Dikarya</taxon>
        <taxon>Ascomycota</taxon>
        <taxon>Saccharomycotina</taxon>
        <taxon>Saccharomycetes</taxon>
        <taxon>Saccharomycetales</taxon>
        <taxon>Saccharomycetaceae</taxon>
        <taxon>Kluyveromyces</taxon>
    </lineage>
</organism>
<dbReference type="EMBL" id="CR382123">
    <property type="protein sequence ID" value="CAH01683.1"/>
    <property type="molecule type" value="Genomic_DNA"/>
</dbReference>
<dbReference type="RefSeq" id="XP_452832.1">
    <property type="nucleotide sequence ID" value="XM_452832.1"/>
</dbReference>
<dbReference type="FunCoup" id="Q6CTA7">
    <property type="interactions" value="270"/>
</dbReference>
<dbReference type="STRING" id="284590.Q6CTA7"/>
<dbReference type="PaxDb" id="284590-Q6CTA7"/>
<dbReference type="KEGG" id="kla:KLLA0_C14135g"/>
<dbReference type="eggNOG" id="KOG2809">
    <property type="taxonomic scope" value="Eukaryota"/>
</dbReference>
<dbReference type="HOGENOM" id="CLU_052839_0_0_1"/>
<dbReference type="InParanoid" id="Q6CTA7"/>
<dbReference type="OMA" id="PCWDQSS"/>
<dbReference type="Proteomes" id="UP000000598">
    <property type="component" value="Chromosome C"/>
</dbReference>
<dbReference type="GO" id="GO:0005730">
    <property type="term" value="C:nucleolus"/>
    <property type="evidence" value="ECO:0007669"/>
    <property type="project" value="UniProtKB-SubCell"/>
</dbReference>
<dbReference type="GO" id="GO:0003676">
    <property type="term" value="F:nucleic acid binding"/>
    <property type="evidence" value="ECO:0007669"/>
    <property type="project" value="InterPro"/>
</dbReference>
<dbReference type="GO" id="GO:0006364">
    <property type="term" value="P:rRNA processing"/>
    <property type="evidence" value="ECO:0007669"/>
    <property type="project" value="UniProtKB-KW"/>
</dbReference>
<dbReference type="InterPro" id="IPR000467">
    <property type="entry name" value="G_patch_dom"/>
</dbReference>
<dbReference type="InterPro" id="IPR050656">
    <property type="entry name" value="PINX1"/>
</dbReference>
<dbReference type="PANTHER" id="PTHR23149">
    <property type="entry name" value="G PATCH DOMAIN CONTAINING PROTEIN"/>
    <property type="match status" value="1"/>
</dbReference>
<dbReference type="PANTHER" id="PTHR23149:SF31">
    <property type="entry name" value="PROTEIN PXR1"/>
    <property type="match status" value="1"/>
</dbReference>
<dbReference type="Pfam" id="PF01585">
    <property type="entry name" value="G-patch"/>
    <property type="match status" value="1"/>
</dbReference>
<dbReference type="SMART" id="SM00443">
    <property type="entry name" value="G_patch"/>
    <property type="match status" value="1"/>
</dbReference>
<dbReference type="PROSITE" id="PS50174">
    <property type="entry name" value="G_PATCH"/>
    <property type="match status" value="1"/>
</dbReference>
<feature type="chain" id="PRO_0000324889" description="Protein PXR1">
    <location>
        <begin position="1"/>
        <end position="271"/>
    </location>
</feature>
<feature type="domain" description="G-patch" evidence="2">
    <location>
        <begin position="25"/>
        <end position="71"/>
    </location>
</feature>
<feature type="region of interest" description="Disordered" evidence="3">
    <location>
        <begin position="1"/>
        <end position="26"/>
    </location>
</feature>
<feature type="region of interest" description="Disordered" evidence="3">
    <location>
        <begin position="149"/>
        <end position="233"/>
    </location>
</feature>
<feature type="compositionally biased region" description="Polar residues" evidence="3">
    <location>
        <begin position="17"/>
        <end position="26"/>
    </location>
</feature>
<feature type="compositionally biased region" description="Basic residues" evidence="3">
    <location>
        <begin position="165"/>
        <end position="205"/>
    </location>
</feature>
<feature type="compositionally biased region" description="Basic and acidic residues" evidence="3">
    <location>
        <begin position="206"/>
        <end position="230"/>
    </location>
</feature>
<reference key="1">
    <citation type="journal article" date="2004" name="Nature">
        <title>Genome evolution in yeasts.</title>
        <authorList>
            <person name="Dujon B."/>
            <person name="Sherman D."/>
            <person name="Fischer G."/>
            <person name="Durrens P."/>
            <person name="Casaregola S."/>
            <person name="Lafontaine I."/>
            <person name="de Montigny J."/>
            <person name="Marck C."/>
            <person name="Neuveglise C."/>
            <person name="Talla E."/>
            <person name="Goffard N."/>
            <person name="Frangeul L."/>
            <person name="Aigle M."/>
            <person name="Anthouard V."/>
            <person name="Babour A."/>
            <person name="Barbe V."/>
            <person name="Barnay S."/>
            <person name="Blanchin S."/>
            <person name="Beckerich J.-M."/>
            <person name="Beyne E."/>
            <person name="Bleykasten C."/>
            <person name="Boisrame A."/>
            <person name="Boyer J."/>
            <person name="Cattolico L."/>
            <person name="Confanioleri F."/>
            <person name="de Daruvar A."/>
            <person name="Despons L."/>
            <person name="Fabre E."/>
            <person name="Fairhead C."/>
            <person name="Ferry-Dumazet H."/>
            <person name="Groppi A."/>
            <person name="Hantraye F."/>
            <person name="Hennequin C."/>
            <person name="Jauniaux N."/>
            <person name="Joyet P."/>
            <person name="Kachouri R."/>
            <person name="Kerrest A."/>
            <person name="Koszul R."/>
            <person name="Lemaire M."/>
            <person name="Lesur I."/>
            <person name="Ma L."/>
            <person name="Muller H."/>
            <person name="Nicaud J.-M."/>
            <person name="Nikolski M."/>
            <person name="Oztas S."/>
            <person name="Ozier-Kalogeropoulos O."/>
            <person name="Pellenz S."/>
            <person name="Potier S."/>
            <person name="Richard G.-F."/>
            <person name="Straub M.-L."/>
            <person name="Suleau A."/>
            <person name="Swennen D."/>
            <person name="Tekaia F."/>
            <person name="Wesolowski-Louvel M."/>
            <person name="Westhof E."/>
            <person name="Wirth B."/>
            <person name="Zeniou-Meyer M."/>
            <person name="Zivanovic Y."/>
            <person name="Bolotin-Fukuhara M."/>
            <person name="Thierry A."/>
            <person name="Bouchier C."/>
            <person name="Caudron B."/>
            <person name="Scarpelli C."/>
            <person name="Gaillardin C."/>
            <person name="Weissenbach J."/>
            <person name="Wincker P."/>
            <person name="Souciet J.-L."/>
        </authorList>
    </citation>
    <scope>NUCLEOTIDE SEQUENCE [LARGE SCALE GENOMIC DNA]</scope>
    <source>
        <strain>ATCC 8585 / CBS 2359 / DSM 70799 / NBRC 1267 / NRRL Y-1140 / WM37</strain>
    </source>
</reference>
<name>PXR1_KLULA</name>
<comment type="function">
    <text evidence="1">Involved in rRNA-processing at A0, A1 and A2 sites and negatively regulates telomerase.</text>
</comment>
<comment type="subcellular location">
    <subcellularLocation>
        <location evidence="1">Nucleus</location>
        <location evidence="1">Nucleolus</location>
    </subcellularLocation>
</comment>
<comment type="similarity">
    <text evidence="4">Belongs to the PINX1 family.</text>
</comment>
<sequence length="271" mass="30853">MGLAAARNKQRFGLDPRNTTWSNNTSRFGHKHLEKLGWKPGSGLGLVPDSTTSHIKVSIKDDNLGLGAKLKKKEKQDEFDSGECTGLDVFQRLLGRLNGNEQTISDELDKQRTDNIINGKWGIHFVKGEVLASTWDAENKQLISYSMGKKRPVEGSSDSEVSDRKKTKKVKKEKKVKKVKKEKKEKKEKKDKKEKKVKKEKKEKKEKKLKDKHSKDTNEITRDQMLKPRDSAAVVPDAVSTRLSVRAKWIRQKRAAVMDAKALNEIFMVTD</sequence>
<accession>Q6CTA7</accession>
<gene>
    <name type="primary">PXR1</name>
    <name type="ordered locus">KLLA0C14135g</name>
</gene>
<keyword id="KW-0539">Nucleus</keyword>
<keyword id="KW-1185">Reference proteome</keyword>
<keyword id="KW-0690">Ribosome biogenesis</keyword>
<keyword id="KW-0698">rRNA processing</keyword>